<evidence type="ECO:0000250" key="1"/>
<evidence type="ECO:0000255" key="2">
    <source>
        <dbReference type="PROSITE-ProRule" id="PRU00609"/>
    </source>
</evidence>
<evidence type="ECO:0000305" key="3"/>
<name>ASNS_ASPOF</name>
<comment type="catalytic activity">
    <reaction>
        <text>L-aspartate + L-glutamine + ATP + H2O = L-asparagine + L-glutamate + AMP + diphosphate + H(+)</text>
        <dbReference type="Rhea" id="RHEA:12228"/>
        <dbReference type="ChEBI" id="CHEBI:15377"/>
        <dbReference type="ChEBI" id="CHEBI:15378"/>
        <dbReference type="ChEBI" id="CHEBI:29985"/>
        <dbReference type="ChEBI" id="CHEBI:29991"/>
        <dbReference type="ChEBI" id="CHEBI:30616"/>
        <dbReference type="ChEBI" id="CHEBI:33019"/>
        <dbReference type="ChEBI" id="CHEBI:58048"/>
        <dbReference type="ChEBI" id="CHEBI:58359"/>
        <dbReference type="ChEBI" id="CHEBI:456215"/>
        <dbReference type="EC" id="6.3.5.4"/>
    </reaction>
</comment>
<comment type="pathway">
    <text>Amino-acid biosynthesis; L-asparagine biosynthesis; L-asparagine from L-aspartate (L-Gln route): step 1/1.</text>
</comment>
<comment type="developmental stage">
    <text>Levels of AS increase markedly after harvest.</text>
</comment>
<dbReference type="EC" id="6.3.5.4"/>
<dbReference type="EMBL" id="X67958">
    <property type="protein sequence ID" value="CAA48141.1"/>
    <property type="molecule type" value="mRNA"/>
</dbReference>
<dbReference type="EMBL" id="X99552">
    <property type="protein sequence ID" value="CAA67889.1"/>
    <property type="molecule type" value="Genomic_DNA"/>
</dbReference>
<dbReference type="PIR" id="S25165">
    <property type="entry name" value="S25165"/>
</dbReference>
<dbReference type="SMR" id="P31752"/>
<dbReference type="UniPathway" id="UPA00134">
    <property type="reaction ID" value="UER00195"/>
</dbReference>
<dbReference type="GO" id="GO:0005829">
    <property type="term" value="C:cytosol"/>
    <property type="evidence" value="ECO:0007669"/>
    <property type="project" value="TreeGrafter"/>
</dbReference>
<dbReference type="GO" id="GO:0004066">
    <property type="term" value="F:asparagine synthase (glutamine-hydrolyzing) activity"/>
    <property type="evidence" value="ECO:0007669"/>
    <property type="project" value="UniProtKB-EC"/>
</dbReference>
<dbReference type="GO" id="GO:0005524">
    <property type="term" value="F:ATP binding"/>
    <property type="evidence" value="ECO:0007669"/>
    <property type="project" value="UniProtKB-KW"/>
</dbReference>
<dbReference type="GO" id="GO:0070981">
    <property type="term" value="P:L-asparagine biosynthetic process"/>
    <property type="evidence" value="ECO:0007669"/>
    <property type="project" value="UniProtKB-UniPathway"/>
</dbReference>
<dbReference type="CDD" id="cd01991">
    <property type="entry name" value="Asn_synthase_B_C"/>
    <property type="match status" value="1"/>
</dbReference>
<dbReference type="CDD" id="cd00712">
    <property type="entry name" value="AsnB"/>
    <property type="match status" value="1"/>
</dbReference>
<dbReference type="FunFam" id="3.40.50.620:FF:000055">
    <property type="entry name" value="Asparagine synthetase [glutamine-hydrolyzing]"/>
    <property type="match status" value="1"/>
</dbReference>
<dbReference type="FunFam" id="3.60.20.10:FF:000024">
    <property type="entry name" value="Asparagine synthetase [glutamine-hydrolyzing]"/>
    <property type="match status" value="1"/>
</dbReference>
<dbReference type="Gene3D" id="3.60.20.10">
    <property type="entry name" value="Glutamine Phosphoribosylpyrophosphate, subunit 1, domain 1"/>
    <property type="match status" value="1"/>
</dbReference>
<dbReference type="Gene3D" id="3.40.50.620">
    <property type="entry name" value="HUPs"/>
    <property type="match status" value="1"/>
</dbReference>
<dbReference type="InterPro" id="IPR006426">
    <property type="entry name" value="Asn_synth_AEB"/>
</dbReference>
<dbReference type="InterPro" id="IPR001962">
    <property type="entry name" value="Asn_synthase"/>
</dbReference>
<dbReference type="InterPro" id="IPR050795">
    <property type="entry name" value="Asn_Synthetase"/>
</dbReference>
<dbReference type="InterPro" id="IPR033738">
    <property type="entry name" value="AsnB_N"/>
</dbReference>
<dbReference type="InterPro" id="IPR017932">
    <property type="entry name" value="GATase_2_dom"/>
</dbReference>
<dbReference type="InterPro" id="IPR029055">
    <property type="entry name" value="Ntn_hydrolases_N"/>
</dbReference>
<dbReference type="InterPro" id="IPR014729">
    <property type="entry name" value="Rossmann-like_a/b/a_fold"/>
</dbReference>
<dbReference type="NCBIfam" id="TIGR01536">
    <property type="entry name" value="asn_synth_AEB"/>
    <property type="match status" value="1"/>
</dbReference>
<dbReference type="NCBIfam" id="NF006949">
    <property type="entry name" value="PRK09431.1"/>
    <property type="match status" value="1"/>
</dbReference>
<dbReference type="PANTHER" id="PTHR11772">
    <property type="entry name" value="ASPARAGINE SYNTHETASE"/>
    <property type="match status" value="1"/>
</dbReference>
<dbReference type="PANTHER" id="PTHR11772:SF48">
    <property type="entry name" value="ASPARAGINE SYNTHETASE [GLUTAMINE-HYDROLYZING] 1"/>
    <property type="match status" value="1"/>
</dbReference>
<dbReference type="Pfam" id="PF00733">
    <property type="entry name" value="Asn_synthase"/>
    <property type="match status" value="1"/>
</dbReference>
<dbReference type="Pfam" id="PF13537">
    <property type="entry name" value="GATase_7"/>
    <property type="match status" value="1"/>
</dbReference>
<dbReference type="PIRSF" id="PIRSF001589">
    <property type="entry name" value="Asn_synthetase_glu-h"/>
    <property type="match status" value="1"/>
</dbReference>
<dbReference type="SUPFAM" id="SSF52402">
    <property type="entry name" value="Adenine nucleotide alpha hydrolases-like"/>
    <property type="match status" value="1"/>
</dbReference>
<dbReference type="SUPFAM" id="SSF56235">
    <property type="entry name" value="N-terminal nucleophile aminohydrolases (Ntn hydrolases)"/>
    <property type="match status" value="1"/>
</dbReference>
<dbReference type="PROSITE" id="PS51278">
    <property type="entry name" value="GATASE_TYPE_2"/>
    <property type="match status" value="1"/>
</dbReference>
<keyword id="KW-0028">Amino-acid biosynthesis</keyword>
<keyword id="KW-0061">Asparagine biosynthesis</keyword>
<keyword id="KW-0067">ATP-binding</keyword>
<keyword id="KW-0315">Glutamine amidotransferase</keyword>
<keyword id="KW-0436">Ligase</keyword>
<keyword id="KW-0547">Nucleotide-binding</keyword>
<sequence length="590" mass="66176">MCGILAVLGCSDDSQAKRVRVLELSRRLKHRGPDWSGLCQHGDCFLSHQRLAIIDPASGDQPLYNEDKSIVVTVNGEIYNHEELRRRLPDHKYRTGSDCEVIAHLYEEHGEDFVDMLDGMFSFVLLDTRNNCFVAARDAVGITPLYIGWGLDGSVWLSSEMKGLNDDCEHFEVFPPGNLYSSRSGSFRRWYNPQWYNETIPSAPYDPLVLRKAFEDAVIKRLMTDVPFGVLLSGGLDSSLVAAVTARHLAGSKAAEQWGTQLHSFCVGLEGSPDLKAAKEVAEYLGTVHHEFHFTVQDGIDAIEDVIFHIETYDVTTIRASTPMFLMARKIKSLGVKMVISGEGSDEIFGGYLYFHKAPNKEEFHHETCRKIKALHQYDCLRANKATSAWGLEARVPFLDKEFMDVAMSIDPESKMIKPDLGRIEKWVLRKAFDDEENPYLPKHILYRQKEQFSDGVGYSWIDGLKAHAAKHVTDRMMLNAARIYPHNTPTTKEAYYYRMIFERFFPQNSARFTVPGGPSIACSTAKAIEWDARWSNNLDPSGRAALGVHDSAYDPPLPSSISAGKGAAMITNKKPRIVDVATPGVVIST</sequence>
<protein>
    <recommendedName>
        <fullName>Asparagine synthetase [glutamine-hydrolyzing]</fullName>
        <shortName>AS</shortName>
        <ecNumber>6.3.5.4</ecNumber>
    </recommendedName>
</protein>
<reference key="1">
    <citation type="journal article" date="1993" name="Plant Physiol.">
        <title>Isolation and characterization of a cDNA clone for a harvest-induced asparagine synthetase from Asparagus officinalis L.</title>
        <authorList>
            <person name="Davies K.M."/>
            <person name="King G.A."/>
        </authorList>
    </citation>
    <scope>NUCLEOTIDE SEQUENCE [MRNA]</scope>
    <source>
        <strain>cv. Limbras 10</strain>
        <tissue>Spear tip</tissue>
    </source>
</reference>
<reference key="2">
    <citation type="online journal article" date="1996" name="Plant Gene Register">
        <title>Nucleotide sequence of the asparagine synthetase gene from Asparagus officinalis L.</title>
        <authorList>
            <person name="Moyle R.L."/>
            <person name="Davies K.M."/>
            <person name="King G.A."/>
            <person name="Farnden K.J.F."/>
        </authorList>
        <locator>PGR96-096</locator>
    </citation>
    <scope>NUCLEOTIDE SEQUENCE [GENOMIC DNA]</scope>
</reference>
<feature type="initiator methionine" description="Removed" evidence="1">
    <location>
        <position position="1"/>
    </location>
</feature>
<feature type="chain" id="PRO_0000056920" description="Asparagine synthetase [glutamine-hydrolyzing]">
    <location>
        <begin position="2"/>
        <end position="590"/>
    </location>
</feature>
<feature type="domain" description="Glutamine amidotransferase type-2" evidence="2">
    <location>
        <begin position="2"/>
        <end position="185"/>
    </location>
</feature>
<feature type="domain" description="Asparagine synthetase">
    <location>
        <begin position="193"/>
        <end position="516"/>
    </location>
</feature>
<feature type="active site" description="For GATase activity" evidence="1">
    <location>
        <position position="2"/>
    </location>
</feature>
<feature type="binding site" evidence="1">
    <location>
        <begin position="50"/>
        <end position="54"/>
    </location>
    <ligand>
        <name>L-glutamine</name>
        <dbReference type="ChEBI" id="CHEBI:58359"/>
    </ligand>
</feature>
<feature type="binding site" evidence="1">
    <location>
        <begin position="75"/>
        <end position="77"/>
    </location>
    <ligand>
        <name>L-glutamine</name>
        <dbReference type="ChEBI" id="CHEBI:58359"/>
    </ligand>
</feature>
<feature type="binding site" evidence="1">
    <location>
        <position position="98"/>
    </location>
    <ligand>
        <name>L-glutamine</name>
        <dbReference type="ChEBI" id="CHEBI:58359"/>
    </ligand>
</feature>
<feature type="binding site" evidence="1">
    <location>
        <position position="231"/>
    </location>
    <ligand>
        <name>ATP</name>
        <dbReference type="ChEBI" id="CHEBI:30616"/>
    </ligand>
</feature>
<feature type="binding site" evidence="1">
    <location>
        <position position="267"/>
    </location>
    <ligand>
        <name>ATP</name>
        <dbReference type="ChEBI" id="CHEBI:30616"/>
    </ligand>
</feature>
<feature type="binding site" evidence="1">
    <location>
        <begin position="341"/>
        <end position="342"/>
    </location>
    <ligand>
        <name>ATP</name>
        <dbReference type="ChEBI" id="CHEBI:30616"/>
    </ligand>
</feature>
<feature type="site" description="Important for beta-aspartyl-AMP intermediate formation" evidence="1">
    <location>
        <position position="343"/>
    </location>
</feature>
<feature type="sequence conflict" description="In Ref. 2; CAA67889." evidence="3" ref="2">
    <original>F</original>
    <variation>L</variation>
    <location>
        <position position="513"/>
    </location>
</feature>
<accession>P31752</accession>
<accession>Q96231</accession>
<organism>
    <name type="scientific">Asparagus officinalis</name>
    <name type="common">Garden asparagus</name>
    <dbReference type="NCBI Taxonomy" id="4686"/>
    <lineage>
        <taxon>Eukaryota</taxon>
        <taxon>Viridiplantae</taxon>
        <taxon>Streptophyta</taxon>
        <taxon>Embryophyta</taxon>
        <taxon>Tracheophyta</taxon>
        <taxon>Spermatophyta</taxon>
        <taxon>Magnoliopsida</taxon>
        <taxon>Liliopsida</taxon>
        <taxon>Asparagales</taxon>
        <taxon>Asparagaceae</taxon>
        <taxon>Asparagoideae</taxon>
        <taxon>Asparagus</taxon>
    </lineage>
</organism>
<proteinExistence type="evidence at transcript level"/>